<reference key="1">
    <citation type="journal article" date="2008" name="J. Biol. Chem.">
        <title>Biochemical and Structural Insights into Bacterial Organelle Form and Biogenesis.</title>
        <authorList>
            <person name="Parsons J.B."/>
            <person name="Dinesh S.D."/>
            <person name="Deery E."/>
            <person name="Leech H.K."/>
            <person name="Brindley A.A."/>
            <person name="Heldt D."/>
            <person name="Frank S."/>
            <person name="Smales C.M."/>
            <person name="Lunsdorf H."/>
            <person name="Rambach A."/>
            <person name="Gass M.H."/>
            <person name="Bleloch A."/>
            <person name="McClean K.J."/>
            <person name="Munro A.W."/>
            <person name="Rigby S.E.J."/>
            <person name="Warren M.J."/>
            <person name="Prentice M.B."/>
        </authorList>
    </citation>
    <scope>NUCLEOTIDE SEQUENCE [GENOMIC DNA]</scope>
    <scope>FUNCTION</scope>
    <scope>PATHWAY</scope>
</reference>
<keyword id="KW-1283">Bacterial microcompartment</keyword>
<keyword id="KW-0143">Chaperone</keyword>
<keyword id="KW-0378">Hydrolase</keyword>
<keyword id="KW-0460">Magnesium</keyword>
<keyword id="KW-0479">Metal-binding</keyword>
<protein>
    <recommendedName>
        <fullName evidence="1 4">Propanediol dehydratase-reactivating factor small subunit</fullName>
        <shortName>DDR small subunit</shortName>
    </recommendedName>
    <alternativeName>
        <fullName>Propanediol utilization protein PduH</fullName>
    </alternativeName>
</protein>
<evidence type="ECO:0000250" key="1">
    <source>
        <dbReference type="UniProtKB" id="O68196"/>
    </source>
</evidence>
<evidence type="ECO:0000250" key="2">
    <source>
        <dbReference type="UniProtKB" id="Q8ZNR6"/>
    </source>
</evidence>
<evidence type="ECO:0000269" key="3">
    <source>
    </source>
</evidence>
<evidence type="ECO:0000303" key="4">
    <source>
    </source>
</evidence>
<evidence type="ECO:0000305" key="5"/>
<proteinExistence type="inferred from homology"/>
<dbReference type="EMBL" id="AM498294">
    <property type="protein sequence ID" value="CAM57289.1"/>
    <property type="molecule type" value="Genomic_DNA"/>
</dbReference>
<dbReference type="SMR" id="B1VB68"/>
<dbReference type="UniPathway" id="UPA00621"/>
<dbReference type="GO" id="GO:0031469">
    <property type="term" value="C:bacterial microcompartment"/>
    <property type="evidence" value="ECO:0007669"/>
    <property type="project" value="UniProtKB-SubCell"/>
</dbReference>
<dbReference type="GO" id="GO:0016787">
    <property type="term" value="F:hydrolase activity"/>
    <property type="evidence" value="ECO:0007669"/>
    <property type="project" value="UniProtKB-KW"/>
</dbReference>
<dbReference type="GO" id="GO:0046872">
    <property type="term" value="F:metal ion binding"/>
    <property type="evidence" value="ECO:0007669"/>
    <property type="project" value="UniProtKB-KW"/>
</dbReference>
<dbReference type="GO" id="GO:0051144">
    <property type="term" value="P:propanediol catabolic process"/>
    <property type="evidence" value="ECO:0007669"/>
    <property type="project" value="UniProtKB-UniPathway"/>
</dbReference>
<dbReference type="Gene3D" id="3.40.50.10150">
    <property type="entry name" value="B12-dependent dehydatase associated subunit"/>
    <property type="match status" value="1"/>
</dbReference>
<dbReference type="InterPro" id="IPR010254">
    <property type="entry name" value="B12-dep_deHydtase_bsu"/>
</dbReference>
<dbReference type="InterPro" id="IPR003208">
    <property type="entry name" value="Dehydtase/Dehydtase_re"/>
</dbReference>
<dbReference type="InterPro" id="IPR009192">
    <property type="entry name" value="Diol/glycerol_deHydtase_re_ssu"/>
</dbReference>
<dbReference type="Pfam" id="PF02288">
    <property type="entry name" value="Dehydratase_MU"/>
    <property type="match status" value="1"/>
</dbReference>
<dbReference type="PIRSF" id="PIRSF011503">
    <property type="entry name" value="DdrB_PduH"/>
    <property type="match status" value="1"/>
</dbReference>
<dbReference type="SUPFAM" id="SSF52968">
    <property type="entry name" value="B12-dependent dehydatase associated subunit"/>
    <property type="match status" value="1"/>
</dbReference>
<feature type="chain" id="PRO_0000454263" description="Propanediol dehydratase-reactivating factor small subunit">
    <location>
        <begin position="1"/>
        <end position="116"/>
    </location>
</feature>
<feature type="binding site" evidence="1">
    <location>
        <position position="31"/>
    </location>
    <ligand>
        <name>Mg(2+)</name>
        <dbReference type="ChEBI" id="CHEBI:18420"/>
    </ligand>
</feature>
<name>PDUH_CITFR</name>
<sequence>MESNLTTPAIVIFATAGCTDVWGDVLLGIEEEGIPFVIQESPSTDVIHNAWLAACQSPLLVGIGCSREKLVVHYKNLPTSAPLFTLTYQQDNHARRSIGNNAARLVKGIPFRECHS</sequence>
<accession>B1VB68</accession>
<gene>
    <name evidence="4" type="primary">pduH</name>
</gene>
<comment type="function">
    <text evidence="1">Small subunit of the propanediol dehydratase-reactivating factor (DDR), which reactivates suicidally inhibited adenosylcobalamin-dependent propanediol dehydratase (diol dehydratase, DDH) found in the bacterial microcompartment (BMC) dedicated to 1,2-propanediol (1,2-PD) degradation. Reactivates inactivated DDH in the presence of ATP, Mg(2+) and free adenosylcobalamin (AdoCbl), by mediating the exchange of the tightly bound damaged cofactor AdoCbl for a free intact one.</text>
</comment>
<comment type="function">
    <text evidence="3">Expression of a cosmid containing the full 21-gene pdu operon in E.coli allows E.coli to grow on 1,2-propanediol (1,2-PD) with the appearance of bacterial microcompartments (BMC) in its cytoplasm.</text>
</comment>
<comment type="function">
    <text evidence="5">The 1,2-PD-specific bacterial microcompartment (BMC) concentrates low levels of 1,2-PD catabolic enzymes, concentrates volatile reaction intermediates thus enhancing pathway flux and keeps the level of toxic, mutagenic propionaldehyde low.</text>
</comment>
<comment type="catalytic activity">
    <reaction evidence="1">
        <text>ATP + H2O = ADP + phosphate + H(+)</text>
        <dbReference type="Rhea" id="RHEA:13065"/>
        <dbReference type="ChEBI" id="CHEBI:15377"/>
        <dbReference type="ChEBI" id="CHEBI:15378"/>
        <dbReference type="ChEBI" id="CHEBI:30616"/>
        <dbReference type="ChEBI" id="CHEBI:43474"/>
        <dbReference type="ChEBI" id="CHEBI:456216"/>
    </reaction>
</comment>
<comment type="cofactor">
    <cofactor evidence="1">
        <name>Mg(2+)</name>
        <dbReference type="ChEBI" id="CHEBI:18420"/>
    </cofactor>
</comment>
<comment type="pathway">
    <text evidence="3">Polyol metabolism; 1,2-propanediol degradation.</text>
</comment>
<comment type="subunit">
    <text evidence="1">Forms a heterotetramer PduG(2)/PduH(2).</text>
</comment>
<comment type="subcellular location">
    <subcellularLocation>
        <location evidence="2">Bacterial microcompartment</location>
    </subcellularLocation>
</comment>
<comment type="similarity">
    <text evidence="5">Belongs to the DdrB/PduH family.</text>
</comment>
<organism>
    <name type="scientific">Citrobacter freundii</name>
    <dbReference type="NCBI Taxonomy" id="546"/>
    <lineage>
        <taxon>Bacteria</taxon>
        <taxon>Pseudomonadati</taxon>
        <taxon>Pseudomonadota</taxon>
        <taxon>Gammaproteobacteria</taxon>
        <taxon>Enterobacterales</taxon>
        <taxon>Enterobacteriaceae</taxon>
        <taxon>Citrobacter</taxon>
        <taxon>Citrobacter freundii complex</taxon>
    </lineage>
</organism>